<keyword id="KW-0678">Repressor</keyword>
<keyword id="KW-0687">Ribonucleoprotein</keyword>
<keyword id="KW-0689">Ribosomal protein</keyword>
<keyword id="KW-0694">RNA-binding</keyword>
<keyword id="KW-0699">rRNA-binding</keyword>
<keyword id="KW-0810">Translation regulation</keyword>
<keyword id="KW-0820">tRNA-binding</keyword>
<organism>
    <name type="scientific">Nitrosomonas eutropha (strain DSM 101675 / C91 / Nm57)</name>
    <dbReference type="NCBI Taxonomy" id="335283"/>
    <lineage>
        <taxon>Bacteria</taxon>
        <taxon>Pseudomonadati</taxon>
        <taxon>Pseudomonadota</taxon>
        <taxon>Betaproteobacteria</taxon>
        <taxon>Nitrosomonadales</taxon>
        <taxon>Nitrosomonadaceae</taxon>
        <taxon>Nitrosomonas</taxon>
    </lineage>
</organism>
<evidence type="ECO:0000255" key="1">
    <source>
        <dbReference type="HAMAP-Rule" id="MF_01318"/>
    </source>
</evidence>
<evidence type="ECO:0000305" key="2"/>
<accession>Q0AF50</accession>
<proteinExistence type="inferred from homology"/>
<sequence length="231" mass="24419">MAKSSRRYKEIAQKIDRDRLYPLTDALALVKEVATAKFDESVDIAINLGIDVRKSDQVVRGAVVLPSGTGKTVRVAVFAQGDKAKEALDAGADIVGLEDLAEQVKANEINFDLAIASPDSMRIVGQLGQILGPRGLMPNPKVGTVTLDVASAVKNAKAGQIQFRADKAGIVHCTVGRASFSVDALRENIIALVDALNKSKPATSKGVYLRKMAISSTMGAGVRVDHAGIIN</sequence>
<gene>
    <name evidence="1" type="primary">rplA</name>
    <name type="ordered locus">Neut_1798</name>
</gene>
<dbReference type="EMBL" id="CP000450">
    <property type="protein sequence ID" value="ABI60032.1"/>
    <property type="molecule type" value="Genomic_DNA"/>
</dbReference>
<dbReference type="RefSeq" id="WP_011634838.1">
    <property type="nucleotide sequence ID" value="NC_008344.1"/>
</dbReference>
<dbReference type="SMR" id="Q0AF50"/>
<dbReference type="STRING" id="335283.Neut_1798"/>
<dbReference type="KEGG" id="net:Neut_1798"/>
<dbReference type="eggNOG" id="COG0081">
    <property type="taxonomic scope" value="Bacteria"/>
</dbReference>
<dbReference type="HOGENOM" id="CLU_062853_0_0_4"/>
<dbReference type="OrthoDB" id="9803740at2"/>
<dbReference type="Proteomes" id="UP000001966">
    <property type="component" value="Chromosome"/>
</dbReference>
<dbReference type="GO" id="GO:0022625">
    <property type="term" value="C:cytosolic large ribosomal subunit"/>
    <property type="evidence" value="ECO:0007669"/>
    <property type="project" value="TreeGrafter"/>
</dbReference>
<dbReference type="GO" id="GO:0019843">
    <property type="term" value="F:rRNA binding"/>
    <property type="evidence" value="ECO:0007669"/>
    <property type="project" value="UniProtKB-UniRule"/>
</dbReference>
<dbReference type="GO" id="GO:0003735">
    <property type="term" value="F:structural constituent of ribosome"/>
    <property type="evidence" value="ECO:0007669"/>
    <property type="project" value="InterPro"/>
</dbReference>
<dbReference type="GO" id="GO:0000049">
    <property type="term" value="F:tRNA binding"/>
    <property type="evidence" value="ECO:0007669"/>
    <property type="project" value="UniProtKB-KW"/>
</dbReference>
<dbReference type="GO" id="GO:0006417">
    <property type="term" value="P:regulation of translation"/>
    <property type="evidence" value="ECO:0007669"/>
    <property type="project" value="UniProtKB-KW"/>
</dbReference>
<dbReference type="GO" id="GO:0006412">
    <property type="term" value="P:translation"/>
    <property type="evidence" value="ECO:0007669"/>
    <property type="project" value="UniProtKB-UniRule"/>
</dbReference>
<dbReference type="CDD" id="cd00403">
    <property type="entry name" value="Ribosomal_L1"/>
    <property type="match status" value="1"/>
</dbReference>
<dbReference type="FunFam" id="3.40.50.790:FF:000001">
    <property type="entry name" value="50S ribosomal protein L1"/>
    <property type="match status" value="1"/>
</dbReference>
<dbReference type="Gene3D" id="3.30.190.20">
    <property type="match status" value="1"/>
</dbReference>
<dbReference type="Gene3D" id="3.40.50.790">
    <property type="match status" value="1"/>
</dbReference>
<dbReference type="HAMAP" id="MF_01318_B">
    <property type="entry name" value="Ribosomal_uL1_B"/>
    <property type="match status" value="1"/>
</dbReference>
<dbReference type="InterPro" id="IPR005878">
    <property type="entry name" value="Ribosom_uL1_bac-type"/>
</dbReference>
<dbReference type="InterPro" id="IPR002143">
    <property type="entry name" value="Ribosomal_uL1"/>
</dbReference>
<dbReference type="InterPro" id="IPR023674">
    <property type="entry name" value="Ribosomal_uL1-like"/>
</dbReference>
<dbReference type="InterPro" id="IPR028364">
    <property type="entry name" value="Ribosomal_uL1/biogenesis"/>
</dbReference>
<dbReference type="InterPro" id="IPR016095">
    <property type="entry name" value="Ribosomal_uL1_3-a/b-sand"/>
</dbReference>
<dbReference type="InterPro" id="IPR023673">
    <property type="entry name" value="Ribosomal_uL1_CS"/>
</dbReference>
<dbReference type="NCBIfam" id="TIGR01169">
    <property type="entry name" value="rplA_bact"/>
    <property type="match status" value="1"/>
</dbReference>
<dbReference type="PANTHER" id="PTHR36427">
    <property type="entry name" value="54S RIBOSOMAL PROTEIN L1, MITOCHONDRIAL"/>
    <property type="match status" value="1"/>
</dbReference>
<dbReference type="PANTHER" id="PTHR36427:SF3">
    <property type="entry name" value="LARGE RIBOSOMAL SUBUNIT PROTEIN UL1M"/>
    <property type="match status" value="1"/>
</dbReference>
<dbReference type="Pfam" id="PF00687">
    <property type="entry name" value="Ribosomal_L1"/>
    <property type="match status" value="1"/>
</dbReference>
<dbReference type="PIRSF" id="PIRSF002155">
    <property type="entry name" value="Ribosomal_L1"/>
    <property type="match status" value="1"/>
</dbReference>
<dbReference type="SUPFAM" id="SSF56808">
    <property type="entry name" value="Ribosomal protein L1"/>
    <property type="match status" value="1"/>
</dbReference>
<dbReference type="PROSITE" id="PS01199">
    <property type="entry name" value="RIBOSOMAL_L1"/>
    <property type="match status" value="1"/>
</dbReference>
<comment type="function">
    <text evidence="1">Binds directly to 23S rRNA. The L1 stalk is quite mobile in the ribosome, and is involved in E site tRNA release.</text>
</comment>
<comment type="function">
    <text evidence="1">Protein L1 is also a translational repressor protein, it controls the translation of the L11 operon by binding to its mRNA.</text>
</comment>
<comment type="subunit">
    <text evidence="1">Part of the 50S ribosomal subunit.</text>
</comment>
<comment type="similarity">
    <text evidence="1">Belongs to the universal ribosomal protein uL1 family.</text>
</comment>
<feature type="chain" id="PRO_0000308062" description="Large ribosomal subunit protein uL1">
    <location>
        <begin position="1"/>
        <end position="231"/>
    </location>
</feature>
<name>RL1_NITEC</name>
<reference key="1">
    <citation type="journal article" date="2007" name="Environ. Microbiol.">
        <title>Whole-genome analysis of the ammonia-oxidizing bacterium, Nitrosomonas eutropha C91: implications for niche adaptation.</title>
        <authorList>
            <person name="Stein L.Y."/>
            <person name="Arp D.J."/>
            <person name="Berube P.M."/>
            <person name="Chain P.S."/>
            <person name="Hauser L."/>
            <person name="Jetten M.S."/>
            <person name="Klotz M.G."/>
            <person name="Larimer F.W."/>
            <person name="Norton J.M."/>
            <person name="Op den Camp H.J.M."/>
            <person name="Shin M."/>
            <person name="Wei X."/>
        </authorList>
    </citation>
    <scope>NUCLEOTIDE SEQUENCE [LARGE SCALE GENOMIC DNA]</scope>
    <source>
        <strain>DSM 101675 / C91 / Nm57</strain>
    </source>
</reference>
<protein>
    <recommendedName>
        <fullName evidence="1">Large ribosomal subunit protein uL1</fullName>
    </recommendedName>
    <alternativeName>
        <fullName evidence="2">50S ribosomal protein L1</fullName>
    </alternativeName>
</protein>